<organism>
    <name type="scientific">Staphylococcus aureus (strain COL)</name>
    <dbReference type="NCBI Taxonomy" id="93062"/>
    <lineage>
        <taxon>Bacteria</taxon>
        <taxon>Bacillati</taxon>
        <taxon>Bacillota</taxon>
        <taxon>Bacilli</taxon>
        <taxon>Bacillales</taxon>
        <taxon>Staphylococcaceae</taxon>
        <taxon>Staphylococcus</taxon>
    </lineage>
</organism>
<accession>Q5HFP7</accession>
<reference key="1">
    <citation type="journal article" date="2005" name="J. Bacteriol.">
        <title>Insights on evolution of virulence and resistance from the complete genome analysis of an early methicillin-resistant Staphylococcus aureus strain and a biofilm-producing methicillin-resistant Staphylococcus epidermidis strain.</title>
        <authorList>
            <person name="Gill S.R."/>
            <person name="Fouts D.E."/>
            <person name="Archer G.L."/>
            <person name="Mongodin E.F."/>
            <person name="DeBoy R.T."/>
            <person name="Ravel J."/>
            <person name="Paulsen I.T."/>
            <person name="Kolonay J.F."/>
            <person name="Brinkac L.M."/>
            <person name="Beanan M.J."/>
            <person name="Dodson R.J."/>
            <person name="Daugherty S.C."/>
            <person name="Madupu R."/>
            <person name="Angiuoli S.V."/>
            <person name="Durkin A.S."/>
            <person name="Haft D.H."/>
            <person name="Vamathevan J.J."/>
            <person name="Khouri H."/>
            <person name="Utterback T.R."/>
            <person name="Lee C."/>
            <person name="Dimitrov G."/>
            <person name="Jiang L."/>
            <person name="Qin H."/>
            <person name="Weidman J."/>
            <person name="Tran K."/>
            <person name="Kang K.H."/>
            <person name="Hance I.R."/>
            <person name="Nelson K.E."/>
            <person name="Fraser C.M."/>
        </authorList>
    </citation>
    <scope>NUCLEOTIDE SEQUENCE [LARGE SCALE GENOMIC DNA]</scope>
    <source>
        <strain>COL</strain>
    </source>
</reference>
<gene>
    <name evidence="1" type="primary">nusB</name>
    <name type="ordered locus">SACOL1569</name>
</gene>
<sequence length="129" mass="15061">MSRKESRVQAFQTLFQLEMKDSDLTINEAISFIKDDNPDLDFEFIHWLVSGVKDHEPVLDETISPYLKDWTIARLLKTDRIILRMATYEILHSDTPAKVVMNEAVELTKQFSDDDHYKFINGVLSNIKK</sequence>
<feature type="chain" id="PRO_0000176577" description="Transcription antitermination protein NusB">
    <location>
        <begin position="1"/>
        <end position="129"/>
    </location>
</feature>
<keyword id="KW-0694">RNA-binding</keyword>
<keyword id="KW-0804">Transcription</keyword>
<keyword id="KW-0889">Transcription antitermination</keyword>
<keyword id="KW-0805">Transcription regulation</keyword>
<evidence type="ECO:0000255" key="1">
    <source>
        <dbReference type="HAMAP-Rule" id="MF_00073"/>
    </source>
</evidence>
<dbReference type="EMBL" id="CP000046">
    <property type="protein sequence ID" value="AAW36761.1"/>
    <property type="molecule type" value="Genomic_DNA"/>
</dbReference>
<dbReference type="RefSeq" id="WP_000087385.1">
    <property type="nucleotide sequence ID" value="NZ_JBGOFO010000003.1"/>
</dbReference>
<dbReference type="SMR" id="Q5HFP7"/>
<dbReference type="KEGG" id="sac:SACOL1569"/>
<dbReference type="HOGENOM" id="CLU_087843_3_3_9"/>
<dbReference type="Proteomes" id="UP000000530">
    <property type="component" value="Chromosome"/>
</dbReference>
<dbReference type="GO" id="GO:0005829">
    <property type="term" value="C:cytosol"/>
    <property type="evidence" value="ECO:0007669"/>
    <property type="project" value="TreeGrafter"/>
</dbReference>
<dbReference type="GO" id="GO:0003723">
    <property type="term" value="F:RNA binding"/>
    <property type="evidence" value="ECO:0007669"/>
    <property type="project" value="UniProtKB-UniRule"/>
</dbReference>
<dbReference type="GO" id="GO:0006353">
    <property type="term" value="P:DNA-templated transcription termination"/>
    <property type="evidence" value="ECO:0007669"/>
    <property type="project" value="UniProtKB-UniRule"/>
</dbReference>
<dbReference type="GO" id="GO:0031564">
    <property type="term" value="P:transcription antitermination"/>
    <property type="evidence" value="ECO:0007669"/>
    <property type="project" value="UniProtKB-KW"/>
</dbReference>
<dbReference type="FunFam" id="1.10.940.10:FF:000011">
    <property type="entry name" value="Transcription antitermination protein NusB"/>
    <property type="match status" value="1"/>
</dbReference>
<dbReference type="Gene3D" id="1.10.940.10">
    <property type="entry name" value="NusB-like"/>
    <property type="match status" value="1"/>
</dbReference>
<dbReference type="HAMAP" id="MF_00073">
    <property type="entry name" value="NusB"/>
    <property type="match status" value="1"/>
</dbReference>
<dbReference type="InterPro" id="IPR035926">
    <property type="entry name" value="NusB-like_sf"/>
</dbReference>
<dbReference type="InterPro" id="IPR011605">
    <property type="entry name" value="NusB_fam"/>
</dbReference>
<dbReference type="InterPro" id="IPR006027">
    <property type="entry name" value="NusB_RsmB_TIM44"/>
</dbReference>
<dbReference type="NCBIfam" id="TIGR01951">
    <property type="entry name" value="nusB"/>
    <property type="match status" value="1"/>
</dbReference>
<dbReference type="PANTHER" id="PTHR11078:SF3">
    <property type="entry name" value="ANTITERMINATION NUSB DOMAIN-CONTAINING PROTEIN"/>
    <property type="match status" value="1"/>
</dbReference>
<dbReference type="PANTHER" id="PTHR11078">
    <property type="entry name" value="N UTILIZATION SUBSTANCE PROTEIN B-RELATED"/>
    <property type="match status" value="1"/>
</dbReference>
<dbReference type="Pfam" id="PF01029">
    <property type="entry name" value="NusB"/>
    <property type="match status" value="1"/>
</dbReference>
<dbReference type="SUPFAM" id="SSF48013">
    <property type="entry name" value="NusB-like"/>
    <property type="match status" value="1"/>
</dbReference>
<proteinExistence type="inferred from homology"/>
<name>NUSB_STAAC</name>
<protein>
    <recommendedName>
        <fullName evidence="1">Transcription antitermination protein NusB</fullName>
    </recommendedName>
    <alternativeName>
        <fullName evidence="1">Antitermination factor NusB</fullName>
    </alternativeName>
</protein>
<comment type="function">
    <text evidence="1">Involved in transcription antitermination. Required for transcription of ribosomal RNA (rRNA) genes. Binds specifically to the boxA antiterminator sequence of the ribosomal RNA (rrn) operons.</text>
</comment>
<comment type="similarity">
    <text evidence="1">Belongs to the NusB family.</text>
</comment>